<accession>P22004</accession>
<accession>Q5TCP3</accession>
<proteinExistence type="evidence at protein level"/>
<feature type="signal peptide" evidence="2">
    <location>
        <begin position="1"/>
        <end position="20"/>
    </location>
</feature>
<feature type="propeptide" id="PRO_0000033870" evidence="2">
    <location>
        <begin position="21"/>
        <end position="374"/>
    </location>
</feature>
<feature type="chain" id="PRO_0000033871" description="Bone morphogenetic protein 6">
    <location>
        <begin position="375"/>
        <end position="513"/>
    </location>
</feature>
<feature type="region of interest" description="Disordered" evidence="3">
    <location>
        <begin position="38"/>
        <end position="66"/>
    </location>
</feature>
<feature type="region of interest" description="Disordered" evidence="3">
    <location>
        <begin position="89"/>
        <end position="131"/>
    </location>
</feature>
<feature type="region of interest" description="Disordered" evidence="3">
    <location>
        <begin position="145"/>
        <end position="200"/>
    </location>
</feature>
<feature type="region of interest" description="Disordered" evidence="3">
    <location>
        <begin position="373"/>
        <end position="398"/>
    </location>
</feature>
<feature type="compositionally biased region" description="Low complexity" evidence="3">
    <location>
        <begin position="98"/>
        <end position="121"/>
    </location>
</feature>
<feature type="compositionally biased region" description="Polar residues" evidence="3">
    <location>
        <begin position="158"/>
        <end position="172"/>
    </location>
</feature>
<feature type="glycosylation site" description="N-linked (GlcNAc...) asparagine" evidence="2">
    <location>
        <position position="241"/>
    </location>
</feature>
<feature type="glycosylation site" description="N-linked (GlcNAc...) asparagine" evidence="2">
    <location>
        <position position="269"/>
    </location>
</feature>
<feature type="glycosylation site" description="N-linked (GlcNAc...) asparagine" evidence="2">
    <location>
        <position position="386"/>
    </location>
</feature>
<feature type="glycosylation site" description="N-linked (GlcNAc...) asparagine" evidence="2">
    <location>
        <position position="404"/>
    </location>
</feature>
<feature type="glycosylation site" description="N-linked (GlcNAc...) asparagine" evidence="2 5">
    <location>
        <position position="454"/>
    </location>
</feature>
<feature type="disulfide bond" evidence="5 11">
    <location>
        <begin position="412"/>
        <end position="478"/>
    </location>
</feature>
<feature type="disulfide bond" evidence="5 11">
    <location>
        <begin position="441"/>
        <end position="510"/>
    </location>
</feature>
<feature type="disulfide bond" evidence="5 11">
    <location>
        <begin position="445"/>
        <end position="512"/>
    </location>
</feature>
<feature type="disulfide bond" description="Interchain" evidence="5 11">
    <location>
        <position position="477"/>
    </location>
</feature>
<feature type="sequence variant" id="VAR_087884" description="In IO; associated with disease susceptibility; some patients also carry a HFE variant; decreased function in positive regulation of SMAD protein signal transduction; results in partial activation of hepcidin expression; affects post-translational processing resulting in reduced amount of the mature form; results in impaired secretion; dbSNP:rs199518216." evidence="6 8">
    <original>P</original>
    <variation>S</variation>
    <location>
        <position position="95"/>
    </location>
</feature>
<feature type="sequence variant" id="VAR_087885" description="In IO; associated with disease susceptibility; some patients also carry a HFE variant; decreased function in positive regulation of SMAD protein signal transduction; results in partial activation of hepcidin expression; affects post-translational processing resulting in reduced amount of the mature form; results in impaired secretion; dbSNP:rs200573175." evidence="6 7 9 12">
    <original>L</original>
    <variation>P</variation>
    <location>
        <position position="96"/>
    </location>
</feature>
<feature type="sequence variant" id="VAR_087886" description="In IO; associated with disease susceptibility; dbSNP:rs201486498." evidence="9">
    <original>E</original>
    <variation>Q</variation>
    <location>
        <position position="112"/>
    </location>
</feature>
<feature type="sequence variant" id="VAR_087887" description="In IO; associated with disease susceptibility; some patients also carry a HFE variant; decreased function in positive regulation of SMAD protein signal transduction; results in partial activation of hepcidin expression; affects post-translational processing resulting in reduced amount of the mature form; results in impaired secretion; dbSNP:rs7745236." evidence="6 8 12">
    <original>Q</original>
    <variation>E</variation>
    <location>
        <position position="113"/>
    </location>
</feature>
<feature type="sequence variant" id="VAR_087888" description="In IO; associated with disease susceptibility." evidence="14">
    <location>
        <begin position="158"/>
        <end position="513"/>
    </location>
</feature>
<feature type="sequence variant" id="VAR_047055" description="In dbSNP:rs10458105.">
    <original>R</original>
    <variation>C</variation>
    <location>
        <position position="257"/>
    </location>
</feature>
<feature type="sequence variant" id="VAR_087889" description="In IO; associated with disease susceptibility; dbSNP:rs148916269." evidence="9 14">
    <original>R</original>
    <variation>H</variation>
    <location>
        <position position="257"/>
    </location>
</feature>
<feature type="sequence variant" id="VAR_036200" description="In a colorectal cancer sample; somatic mutation." evidence="4">
    <original>A</original>
    <variation>D</variation>
    <location>
        <position position="343"/>
    </location>
</feature>
<feature type="sequence variant" id="VAR_087890" description="In IO; associated with disease susceptibility; results in decreased activation of hepcidin expression in cultured liver cells; dbSNP:rs142167481." evidence="14 16">
    <original>V</original>
    <variation>M</variation>
    <location>
        <position position="394"/>
    </location>
</feature>
<feature type="sequence variant" id="VAR_036201" description="In a colorectal cancer sample; somatic mutation; dbSNP:rs909733732." evidence="4">
    <original>P</original>
    <variation>L</variation>
    <location>
        <position position="476"/>
    </location>
</feature>
<feature type="strand" evidence="18">
    <location>
        <begin position="411"/>
        <end position="415"/>
    </location>
</feature>
<feature type="strand" evidence="18">
    <location>
        <begin position="418"/>
        <end position="420"/>
    </location>
</feature>
<feature type="turn" evidence="18">
    <location>
        <begin position="421"/>
        <end position="425"/>
    </location>
</feature>
<feature type="turn" evidence="18">
    <location>
        <begin position="427"/>
        <end position="429"/>
    </location>
</feature>
<feature type="strand" evidence="18">
    <location>
        <begin position="430"/>
        <end position="432"/>
    </location>
</feature>
<feature type="strand" evidence="18">
    <location>
        <begin position="434"/>
        <end position="437"/>
    </location>
</feature>
<feature type="strand" evidence="18">
    <location>
        <begin position="440"/>
        <end position="442"/>
    </location>
</feature>
<feature type="turn" evidence="18">
    <location>
        <begin position="451"/>
        <end position="454"/>
    </location>
</feature>
<feature type="helix" evidence="18">
    <location>
        <begin position="457"/>
        <end position="468"/>
    </location>
</feature>
<feature type="turn" evidence="18">
    <location>
        <begin position="470"/>
        <end position="472"/>
    </location>
</feature>
<feature type="strand" evidence="18">
    <location>
        <begin position="477"/>
        <end position="491"/>
    </location>
</feature>
<feature type="strand" evidence="18">
    <location>
        <begin position="497"/>
        <end position="513"/>
    </location>
</feature>
<keyword id="KW-0002">3D-structure</keyword>
<keyword id="KW-0891">Chondrogenesis</keyword>
<keyword id="KW-0165">Cleavage on pair of basic residues</keyword>
<keyword id="KW-0202">Cytokine</keyword>
<keyword id="KW-0217">Developmental protein</keyword>
<keyword id="KW-0221">Differentiation</keyword>
<keyword id="KW-0225">Disease variant</keyword>
<keyword id="KW-1015">Disulfide bond</keyword>
<keyword id="KW-0325">Glycoprotein</keyword>
<keyword id="KW-0339">Growth factor</keyword>
<keyword id="KW-0892">Osteogenesis</keyword>
<keyword id="KW-1267">Proteomics identification</keyword>
<keyword id="KW-1185">Reference proteome</keyword>
<keyword id="KW-0964">Secreted</keyword>
<keyword id="KW-0732">Signal</keyword>
<reference key="1">
    <citation type="journal article" date="1990" name="Proc. Natl. Acad. Sci. U.S.A.">
        <title>Identification of transforming growth factor beta family members present in bone-inductive protein purified from bovine bone.</title>
        <authorList>
            <person name="Celeste A.J."/>
            <person name="Iannazzi J.A."/>
            <person name="Taylor R.C."/>
            <person name="Hewick R.M."/>
            <person name="Rosen V."/>
            <person name="Wang E.A."/>
            <person name="Wozney J.M."/>
        </authorList>
    </citation>
    <scope>NUCLEOTIDE SEQUENCE [MRNA]</scope>
    <source>
        <tissue>Bone</tissue>
    </source>
</reference>
<reference key="2">
    <citation type="journal article" date="2003" name="Nature">
        <title>The DNA sequence and analysis of human chromosome 6.</title>
        <authorList>
            <person name="Mungall A.J."/>
            <person name="Palmer S.A."/>
            <person name="Sims S.K."/>
            <person name="Edwards C.A."/>
            <person name="Ashurst J.L."/>
            <person name="Wilming L."/>
            <person name="Jones M.C."/>
            <person name="Horton R."/>
            <person name="Hunt S.E."/>
            <person name="Scott C.E."/>
            <person name="Gilbert J.G.R."/>
            <person name="Clamp M.E."/>
            <person name="Bethel G."/>
            <person name="Milne S."/>
            <person name="Ainscough R."/>
            <person name="Almeida J.P."/>
            <person name="Ambrose K.D."/>
            <person name="Andrews T.D."/>
            <person name="Ashwell R.I.S."/>
            <person name="Babbage A.K."/>
            <person name="Bagguley C.L."/>
            <person name="Bailey J."/>
            <person name="Banerjee R."/>
            <person name="Barker D.J."/>
            <person name="Barlow K.F."/>
            <person name="Bates K."/>
            <person name="Beare D.M."/>
            <person name="Beasley H."/>
            <person name="Beasley O."/>
            <person name="Bird C.P."/>
            <person name="Blakey S.E."/>
            <person name="Bray-Allen S."/>
            <person name="Brook J."/>
            <person name="Brown A.J."/>
            <person name="Brown J.Y."/>
            <person name="Burford D.C."/>
            <person name="Burrill W."/>
            <person name="Burton J."/>
            <person name="Carder C."/>
            <person name="Carter N.P."/>
            <person name="Chapman J.C."/>
            <person name="Clark S.Y."/>
            <person name="Clark G."/>
            <person name="Clee C.M."/>
            <person name="Clegg S."/>
            <person name="Cobley V."/>
            <person name="Collier R.E."/>
            <person name="Collins J.E."/>
            <person name="Colman L.K."/>
            <person name="Corby N.R."/>
            <person name="Coville G.J."/>
            <person name="Culley K.M."/>
            <person name="Dhami P."/>
            <person name="Davies J."/>
            <person name="Dunn M."/>
            <person name="Earthrowl M.E."/>
            <person name="Ellington A.E."/>
            <person name="Evans K.A."/>
            <person name="Faulkner L."/>
            <person name="Francis M.D."/>
            <person name="Frankish A."/>
            <person name="Frankland J."/>
            <person name="French L."/>
            <person name="Garner P."/>
            <person name="Garnett J."/>
            <person name="Ghori M.J."/>
            <person name="Gilby L.M."/>
            <person name="Gillson C.J."/>
            <person name="Glithero R.J."/>
            <person name="Grafham D.V."/>
            <person name="Grant M."/>
            <person name="Gribble S."/>
            <person name="Griffiths C."/>
            <person name="Griffiths M.N.D."/>
            <person name="Hall R."/>
            <person name="Halls K.S."/>
            <person name="Hammond S."/>
            <person name="Harley J.L."/>
            <person name="Hart E.A."/>
            <person name="Heath P.D."/>
            <person name="Heathcott R."/>
            <person name="Holmes S.J."/>
            <person name="Howden P.J."/>
            <person name="Howe K.L."/>
            <person name="Howell G.R."/>
            <person name="Huckle E."/>
            <person name="Humphray S.J."/>
            <person name="Humphries M.D."/>
            <person name="Hunt A.R."/>
            <person name="Johnson C.M."/>
            <person name="Joy A.A."/>
            <person name="Kay M."/>
            <person name="Keenan S.J."/>
            <person name="Kimberley A.M."/>
            <person name="King A."/>
            <person name="Laird G.K."/>
            <person name="Langford C."/>
            <person name="Lawlor S."/>
            <person name="Leongamornlert D.A."/>
            <person name="Leversha M."/>
            <person name="Lloyd C.R."/>
            <person name="Lloyd D.M."/>
            <person name="Loveland J.E."/>
            <person name="Lovell J."/>
            <person name="Martin S."/>
            <person name="Mashreghi-Mohammadi M."/>
            <person name="Maslen G.L."/>
            <person name="Matthews L."/>
            <person name="McCann O.T."/>
            <person name="McLaren S.J."/>
            <person name="McLay K."/>
            <person name="McMurray A."/>
            <person name="Moore M.J.F."/>
            <person name="Mullikin J.C."/>
            <person name="Niblett D."/>
            <person name="Nickerson T."/>
            <person name="Novik K.L."/>
            <person name="Oliver K."/>
            <person name="Overton-Larty E.K."/>
            <person name="Parker A."/>
            <person name="Patel R."/>
            <person name="Pearce A.V."/>
            <person name="Peck A.I."/>
            <person name="Phillimore B.J.C.T."/>
            <person name="Phillips S."/>
            <person name="Plumb R.W."/>
            <person name="Porter K.M."/>
            <person name="Ramsey Y."/>
            <person name="Ranby S.A."/>
            <person name="Rice C.M."/>
            <person name="Ross M.T."/>
            <person name="Searle S.M."/>
            <person name="Sehra H.K."/>
            <person name="Sheridan E."/>
            <person name="Skuce C.D."/>
            <person name="Smith S."/>
            <person name="Smith M."/>
            <person name="Spraggon L."/>
            <person name="Squares S.L."/>
            <person name="Steward C.A."/>
            <person name="Sycamore N."/>
            <person name="Tamlyn-Hall G."/>
            <person name="Tester J."/>
            <person name="Theaker A.J."/>
            <person name="Thomas D.W."/>
            <person name="Thorpe A."/>
            <person name="Tracey A."/>
            <person name="Tromans A."/>
            <person name="Tubby B."/>
            <person name="Wall M."/>
            <person name="Wallis J.M."/>
            <person name="West A.P."/>
            <person name="White S.S."/>
            <person name="Whitehead S.L."/>
            <person name="Whittaker H."/>
            <person name="Wild A."/>
            <person name="Willey D.J."/>
            <person name="Wilmer T.E."/>
            <person name="Wood J.M."/>
            <person name="Wray P.W."/>
            <person name="Wyatt J.C."/>
            <person name="Young L."/>
            <person name="Younger R.M."/>
            <person name="Bentley D.R."/>
            <person name="Coulson A."/>
            <person name="Durbin R.M."/>
            <person name="Hubbard T."/>
            <person name="Sulston J.E."/>
            <person name="Dunham I."/>
            <person name="Rogers J."/>
            <person name="Beck S."/>
        </authorList>
    </citation>
    <scope>NUCLEOTIDE SEQUENCE [LARGE SCALE GENOMIC DNA]</scope>
</reference>
<reference key="3">
    <citation type="journal article" date="2021" name="Angiogenesis">
        <title>BMP6/TAZ-Hippo signaling modulates angiogenesis and endothelial cell response to VEGF.</title>
        <authorList>
            <person name="Pulkkinen H.H."/>
            <person name="Kiema M."/>
            <person name="Lappalainen J.P."/>
            <person name="Toropainen A."/>
            <person name="Beter M."/>
            <person name="Tirronen A."/>
            <person name="Holappa L."/>
            <person name="Niskanen H."/>
            <person name="Kaikkonen M.U."/>
            <person name="Ylae-Herttuala S."/>
            <person name="Laakkonen J.P."/>
        </authorList>
    </citation>
    <scope>FUNCTION</scope>
</reference>
<reference key="4">
    <citation type="journal article" date="2006" name="Science">
        <title>The consensus coding sequences of human breast and colorectal cancers.</title>
        <authorList>
            <person name="Sjoeblom T."/>
            <person name="Jones S."/>
            <person name="Wood L.D."/>
            <person name="Parsons D.W."/>
            <person name="Lin J."/>
            <person name="Barber T.D."/>
            <person name="Mandelker D."/>
            <person name="Leary R.J."/>
            <person name="Ptak J."/>
            <person name="Silliman N."/>
            <person name="Szabo S."/>
            <person name="Buckhaults P."/>
            <person name="Farrell C."/>
            <person name="Meeh P."/>
            <person name="Markowitz S.D."/>
            <person name="Willis J."/>
            <person name="Dawson D."/>
            <person name="Willson J.K.V."/>
            <person name="Gazdar A.F."/>
            <person name="Hartigan J."/>
            <person name="Wu L."/>
            <person name="Liu C."/>
            <person name="Parmigiani G."/>
            <person name="Park B.H."/>
            <person name="Bachman K.E."/>
            <person name="Papadopoulos N."/>
            <person name="Vogelstein B."/>
            <person name="Kinzler K.W."/>
            <person name="Velculescu V.E."/>
        </authorList>
    </citation>
    <scope>VARIANTS [LARGE SCALE ANALYSIS] ASP-343 AND LEU-476</scope>
</reference>
<reference key="5">
    <citation type="journal article" date="2018" name="Blood">
        <title>Erythroferrone inhibits the induction of hepcidin by BMP6.</title>
        <authorList>
            <person name="Arezes J."/>
            <person name="Foy N."/>
            <person name="McHugh K."/>
            <person name="Sawant A."/>
            <person name="Quinkert D."/>
            <person name="Terraube V."/>
            <person name="Brinth A."/>
            <person name="Tam M."/>
            <person name="LaVallie E.R."/>
            <person name="Taylor S."/>
            <person name="Armitage A.E."/>
            <person name="Pasricha S.R."/>
            <person name="Cunningham O."/>
            <person name="Lambert M."/>
            <person name="Draper S.J."/>
            <person name="Jasuja R."/>
            <person name="Drakesmith H."/>
        </authorList>
    </citation>
    <scope>FUNCTION</scope>
    <scope>INTERACTION WITH MOUSE ERFE</scope>
</reference>
<reference key="6">
    <citation type="journal article" date="2020" name="Blood">
        <title>Erythroferrone lowers hepcidin by sequestering BMP2/6 heterodimer from binding to the BMP type I receptor ALK3.</title>
        <authorList>
            <person name="Wang C.Y."/>
            <person name="Xu Y."/>
            <person name="Traeger L."/>
            <person name="Dogan D.Y."/>
            <person name="Xiao X."/>
            <person name="Steinbicker A.U."/>
            <person name="Babitt J.L."/>
        </authorList>
    </citation>
    <scope>FUNCTION</scope>
    <scope>INTERACTION WITH MOUSE ERFE; MOUSE ACVR1; MOUSE BMPR1A AND BMP2</scope>
</reference>
<reference key="7">
    <citation type="journal article" date="2007" name="Biochemistry">
        <title>BMP-3 and BMP-6 structures illuminate the nature of binding specificity with receptors.</title>
        <authorList>
            <person name="Allendorph G.P."/>
            <person name="Isaacs M.J."/>
            <person name="Kawakami Y."/>
            <person name="Izpisua Belmonte J.C."/>
            <person name="Choe S."/>
        </authorList>
    </citation>
    <scope>X-RAY CRYSTALLOGRAPHY (2.49 ANGSTROMS) OF 382-513</scope>
</reference>
<reference key="8">
    <citation type="journal article" date="2008" name="FEBS J.">
        <title>Type I receptor binding of bone morphogenetic protein 6 is dependent on N-glycosylation of the ligand.</title>
        <authorList>
            <person name="Saremba S."/>
            <person name="Nickel J."/>
            <person name="Seher A."/>
            <person name="Kotzsch A."/>
            <person name="Sebald W."/>
            <person name="Mueller T.D."/>
        </authorList>
    </citation>
    <scope>X-RAY CRYSTALLOGRAPHY (2.10 ANGSTROMS) OF 397-513</scope>
    <scope>DISULFIDE BONDS</scope>
    <scope>GLYCOSYLATION AT ASN-454</scope>
    <scope>INTERACTION WITH ACVR1 AND ACVR2B</scope>
    <scope>FUNCTION</scope>
</reference>
<reference key="9">
    <citation type="journal article" date="2019" name="Sci. Transl. Med.">
        <title>A BMP/activin A chimera is superior to native BMPs and induces bone repair in nonhuman primates when delivered in a composite matrix.</title>
        <authorList>
            <person name="Seeherman H.J."/>
            <person name="Berasi S.P."/>
            <person name="Brown C.T."/>
            <person name="Martinez R.X."/>
            <person name="Juo Z.S."/>
            <person name="Jelinsky S."/>
            <person name="Cain M.J."/>
            <person name="Grode J."/>
            <person name="Tumelty K.E."/>
            <person name="Bohner M."/>
            <person name="Grinberg O."/>
            <person name="Orr N."/>
            <person name="Shoseyov O."/>
            <person name="Eyckmans J."/>
            <person name="Chen C."/>
            <person name="Morales P.R."/>
            <person name="Wilson C.G."/>
            <person name="Vanderploeg E.J."/>
            <person name="Wozney J.M."/>
        </authorList>
    </citation>
    <scope>X-RAY CRYSTALLOGRAPHY (2.80 ANGSTROMS) OF 410-513</scope>
    <scope>DISULFIDE BONDS</scope>
    <scope>FUNCTION</scope>
</reference>
<reference key="10">
    <citation type="journal article" date="2016" name="Gastroenterology">
        <title>Heterozygous Mutations in BMP6 pro-peptide lead to inappropriate hepcidin synthesis and moderate iron overload in humans.</title>
        <authorList>
            <person name="Daher R."/>
            <person name="Kannengiesser C."/>
            <person name="Houamel D."/>
            <person name="Lefebvre T."/>
            <person name="Bardou-Jacquet E."/>
            <person name="Ducrot N."/>
            <person name="de Kerguenec C."/>
            <person name="Jouanolle A.M."/>
            <person name="Robreau A.M."/>
            <person name="Oudin C."/>
            <person name="Le Gac G."/>
            <person name="Moulouel B."/>
            <person name="Loustaud-Ratti V."/>
            <person name="Bedossa P."/>
            <person name="Valla D."/>
            <person name="Gouya L."/>
            <person name="Beaumont C."/>
            <person name="Brissot P."/>
            <person name="Puy H."/>
            <person name="Karim Z."/>
            <person name="Tchernitchko D."/>
        </authorList>
    </citation>
    <scope>VARIANTS IO SER-95; PRO-96 AND GLU-113</scope>
    <scope>CHARACTERIZATION OF VARIANTS IO SER-95; PRO-96 AND GLU-113</scope>
    <scope>INVOLVEMENT IN IO</scope>
    <scope>FUNCTION</scope>
    <scope>SUBCELLULAR LOCATION</scope>
</reference>
<reference key="11">
    <citation type="journal article" date="2016" name="Gastroenterology">
        <title>Heterozygous BMP6 variants coupled with HFE variants.</title>
        <authorList>
            <person name="Bignell P."/>
            <person name="Atoyebi W."/>
            <person name="Robson K."/>
        </authorList>
    </citation>
    <scope>VARIANTS IO SER-95 AND GLU-113</scope>
</reference>
<reference key="12">
    <citation type="journal article" date="2016" name="Gastroenterology">
        <title>The p.Leu96Pro missense mutation in the BMP6 gene is repeatedly associated with hyperferritinemia in patients of French origin.</title>
        <authorList>
            <person name="Le Gac G."/>
            <person name="Gourlaouen I."/>
            <person name="Ka C."/>
            <person name="Ferec C."/>
        </authorList>
    </citation>
    <scope>VARIANT IO PRO-96</scope>
</reference>
<reference key="13">
    <citation type="journal article" date="2017" name="Am. J. Hematol.">
        <title>Identification of new BMP6 pro-peptide mutations in patients with iron overload.</title>
        <authorList>
            <person name="Piubelli C."/>
            <person name="Castagna A."/>
            <person name="Marchi G."/>
            <person name="Rizzi M."/>
            <person name="Busti F."/>
            <person name="Badar S."/>
            <person name="Marchetti M."/>
            <person name="De Gobbi M."/>
            <person name="Roetto A."/>
            <person name="Xumerle L."/>
            <person name="Suku E."/>
            <person name="Giorgetti A."/>
            <person name="Delledonne M."/>
            <person name="Olivieri O."/>
            <person name="Girelli D."/>
        </authorList>
    </citation>
    <scope>VARIANTS IO PRO-96; GLN-112 AND HIS-257</scope>
</reference>
<reference key="14">
    <citation type="journal article" date="2020" name="Blood Cells Mol. Dis.">
        <title>Novel mutations in the bone morphogenetic protein 6 gene in patients with iron overload and non-homozygous genotype for the HFE p.Cys282Tyr mutation.</title>
        <authorList>
            <person name="Alvarenga A.M."/>
            <person name="da Silva N.K."/>
            <person name="Fonseca P.F.S."/>
            <person name="Oliveira T.G.M."/>
            <person name="da Silva Monteiro J.B."/>
            <person name="Cancado R.D."/>
            <person name="Naoum F.A."/>
            <person name="Dinardo C.L."/>
            <person name="Brissot P."/>
            <person name="Santos P.C.J.L."/>
        </authorList>
    </citation>
    <scope>VARIANTS IO 158-GLN--HIS-513 DEL; HIS-257 AND MET-394</scope>
</reference>
<reference key="15">
    <citation type="journal article" date="2020" name="Clin. Res. Hepatol. Gastroenterol.">
        <title>Mutations and polymorphisms associated with iron overload in a series of 91 non-HFE haemochromatosis patients.</title>
        <authorList>
            <person name="Borgel A."/>
            <person name="Lamoril J."/>
            <person name="Tchernitchko D."/>
        </authorList>
    </citation>
    <scope>VARIANTS IO PRO-96 AND GLU-113</scope>
</reference>
<reference key="16">
    <citation type="journal article" date="2021" name="Eur. J. Gastroenterol. Hepatol.">
        <title>Novel BMP6 gene mutation in patient with iron overload.</title>
        <authorList>
            <person name="Tchernitchko D."/>
            <person name="Lamoril J."/>
        </authorList>
    </citation>
    <scope>VARIANT IO MET-394</scope>
    <scope>CHARACTERIZATION OF VARIANT IO MET-394</scope>
</reference>
<evidence type="ECO:0000250" key="1">
    <source>
        <dbReference type="UniProtKB" id="P20722"/>
    </source>
</evidence>
<evidence type="ECO:0000255" key="2"/>
<evidence type="ECO:0000256" key="3">
    <source>
        <dbReference type="SAM" id="MobiDB-lite"/>
    </source>
</evidence>
<evidence type="ECO:0000269" key="4">
    <source>
    </source>
</evidence>
<evidence type="ECO:0000269" key="5">
    <source>
    </source>
</evidence>
<evidence type="ECO:0000269" key="6">
    <source>
    </source>
</evidence>
<evidence type="ECO:0000269" key="7">
    <source>
    </source>
</evidence>
<evidence type="ECO:0000269" key="8">
    <source>
    </source>
</evidence>
<evidence type="ECO:0000269" key="9">
    <source>
    </source>
</evidence>
<evidence type="ECO:0000269" key="10">
    <source>
    </source>
</evidence>
<evidence type="ECO:0000269" key="11">
    <source>
    </source>
</evidence>
<evidence type="ECO:0000269" key="12">
    <source>
    </source>
</evidence>
<evidence type="ECO:0000269" key="13">
    <source>
    </source>
</evidence>
<evidence type="ECO:0000269" key="14">
    <source>
    </source>
</evidence>
<evidence type="ECO:0000269" key="15">
    <source>
    </source>
</evidence>
<evidence type="ECO:0000269" key="16">
    <source>
    </source>
</evidence>
<evidence type="ECO:0000305" key="17"/>
<evidence type="ECO:0007829" key="18">
    <source>
        <dbReference type="PDB" id="2R53"/>
    </source>
</evidence>
<dbReference type="EMBL" id="M60315">
    <property type="protein sequence ID" value="AAA36737.1"/>
    <property type="molecule type" value="mRNA"/>
</dbReference>
<dbReference type="EMBL" id="AL135778">
    <property type="status" value="NOT_ANNOTATED_CDS"/>
    <property type="molecule type" value="Genomic_DNA"/>
</dbReference>
<dbReference type="EMBL" id="AL133541">
    <property type="status" value="NOT_ANNOTATED_CDS"/>
    <property type="molecule type" value="Genomic_DNA"/>
</dbReference>
<dbReference type="CCDS" id="CCDS4503.1"/>
<dbReference type="PIR" id="B39263">
    <property type="entry name" value="BMHU6"/>
</dbReference>
<dbReference type="RefSeq" id="NP_001709.1">
    <property type="nucleotide sequence ID" value="NM_001718.6"/>
</dbReference>
<dbReference type="PDB" id="2QCW">
    <property type="method" value="X-ray"/>
    <property type="resolution" value="2.49 A"/>
    <property type="chains" value="A/B=382-513"/>
</dbReference>
<dbReference type="PDB" id="2R52">
    <property type="method" value="X-ray"/>
    <property type="resolution" value="2.50 A"/>
    <property type="chains" value="A/B=375-513"/>
</dbReference>
<dbReference type="PDB" id="2R53">
    <property type="method" value="X-ray"/>
    <property type="resolution" value="2.10 A"/>
    <property type="chains" value="A/B=411-513"/>
</dbReference>
<dbReference type="PDB" id="6OMO">
    <property type="method" value="X-ray"/>
    <property type="resolution" value="2.80 A"/>
    <property type="chains" value="I/J=410-513"/>
</dbReference>
<dbReference type="PDBsum" id="2QCW"/>
<dbReference type="PDBsum" id="2R52"/>
<dbReference type="PDBsum" id="2R53"/>
<dbReference type="PDBsum" id="6OMO"/>
<dbReference type="SMR" id="P22004"/>
<dbReference type="BioGRID" id="107122">
    <property type="interactions" value="16"/>
</dbReference>
<dbReference type="DIP" id="DIP-5797N"/>
<dbReference type="FunCoup" id="P22004">
    <property type="interactions" value="629"/>
</dbReference>
<dbReference type="IntAct" id="P22004">
    <property type="interactions" value="6"/>
</dbReference>
<dbReference type="STRING" id="9606.ENSP00000283147"/>
<dbReference type="BindingDB" id="P22004"/>
<dbReference type="ChEMBL" id="CHEMBL3286078"/>
<dbReference type="GlyCosmos" id="P22004">
    <property type="glycosylation" value="5 sites, No reported glycans"/>
</dbReference>
<dbReference type="GlyGen" id="P22004">
    <property type="glycosylation" value="7 sites, 2 N-linked glycans (2 sites), 1 O-linked glycan (2 sites)"/>
</dbReference>
<dbReference type="iPTMnet" id="P22004"/>
<dbReference type="PhosphoSitePlus" id="P22004"/>
<dbReference type="BioMuta" id="BMP6"/>
<dbReference type="DMDM" id="115076"/>
<dbReference type="jPOST" id="P22004"/>
<dbReference type="MassIVE" id="P22004"/>
<dbReference type="PaxDb" id="9606-ENSP00000283147"/>
<dbReference type="PeptideAtlas" id="P22004"/>
<dbReference type="ProteomicsDB" id="53952"/>
<dbReference type="Pumba" id="P22004"/>
<dbReference type="Antibodypedia" id="3456">
    <property type="antibodies" value="468 antibodies from 37 providers"/>
</dbReference>
<dbReference type="DNASU" id="654"/>
<dbReference type="Ensembl" id="ENST00000283147.7">
    <property type="protein sequence ID" value="ENSP00000283147.6"/>
    <property type="gene ID" value="ENSG00000153162.9"/>
</dbReference>
<dbReference type="GeneID" id="654"/>
<dbReference type="KEGG" id="hsa:654"/>
<dbReference type="MANE-Select" id="ENST00000283147.7">
    <property type="protein sequence ID" value="ENSP00000283147.6"/>
    <property type="RefSeq nucleotide sequence ID" value="NM_001718.6"/>
    <property type="RefSeq protein sequence ID" value="NP_001709.1"/>
</dbReference>
<dbReference type="UCSC" id="uc003mxu.5">
    <property type="organism name" value="human"/>
</dbReference>
<dbReference type="AGR" id="HGNC:1073"/>
<dbReference type="CTD" id="654"/>
<dbReference type="DisGeNET" id="654"/>
<dbReference type="GeneCards" id="BMP6"/>
<dbReference type="HGNC" id="HGNC:1073">
    <property type="gene designation" value="BMP6"/>
</dbReference>
<dbReference type="HPA" id="ENSG00000153162">
    <property type="expression patterns" value="Tissue enhanced (ovary)"/>
</dbReference>
<dbReference type="MalaCards" id="BMP6"/>
<dbReference type="MIM" id="112266">
    <property type="type" value="gene"/>
</dbReference>
<dbReference type="MIM" id="620121">
    <property type="type" value="phenotype"/>
</dbReference>
<dbReference type="neXtProt" id="NX_P22004"/>
<dbReference type="OpenTargets" id="ENSG00000153162"/>
<dbReference type="Orphanet" id="465508">
    <property type="disease" value="Symptomatic form of HFE-related hemochromatosis"/>
</dbReference>
<dbReference type="PharmGKB" id="PA25383"/>
<dbReference type="VEuPathDB" id="HostDB:ENSG00000153162"/>
<dbReference type="eggNOG" id="KOG3900">
    <property type="taxonomic scope" value="Eukaryota"/>
</dbReference>
<dbReference type="GeneTree" id="ENSGT00940000158768"/>
<dbReference type="HOGENOM" id="CLU_020515_4_1_1"/>
<dbReference type="InParanoid" id="P22004"/>
<dbReference type="OMA" id="ERQQPWP"/>
<dbReference type="OrthoDB" id="5987191at2759"/>
<dbReference type="PAN-GO" id="P22004">
    <property type="GO annotations" value="6 GO annotations based on evolutionary models"/>
</dbReference>
<dbReference type="PhylomeDB" id="P22004"/>
<dbReference type="TreeFam" id="TF316134"/>
<dbReference type="PathwayCommons" id="P22004"/>
<dbReference type="SignaLink" id="P22004"/>
<dbReference type="BioGRID-ORCS" id="654">
    <property type="hits" value="11 hits in 1148 CRISPR screens"/>
</dbReference>
<dbReference type="ChiTaRS" id="BMP6">
    <property type="organism name" value="human"/>
</dbReference>
<dbReference type="EvolutionaryTrace" id="P22004"/>
<dbReference type="GeneWiki" id="Bone_morphogenetic_protein_6"/>
<dbReference type="GenomeRNAi" id="654"/>
<dbReference type="Pharos" id="P22004">
    <property type="development level" value="Tbio"/>
</dbReference>
<dbReference type="PRO" id="PR:P22004"/>
<dbReference type="Proteomes" id="UP000005640">
    <property type="component" value="Chromosome 6"/>
</dbReference>
<dbReference type="RNAct" id="P22004">
    <property type="molecule type" value="protein"/>
</dbReference>
<dbReference type="Bgee" id="ENSG00000153162">
    <property type="expression patterns" value="Expressed in secondary oocyte and 123 other cell types or tissues"/>
</dbReference>
<dbReference type="GO" id="GO:0150005">
    <property type="term" value="C:enzyme activator complex"/>
    <property type="evidence" value="ECO:0000314"/>
    <property type="project" value="UniProt"/>
</dbReference>
<dbReference type="GO" id="GO:0005615">
    <property type="term" value="C:extracellular space"/>
    <property type="evidence" value="ECO:0000315"/>
    <property type="project" value="UniProtKB"/>
</dbReference>
<dbReference type="GO" id="GO:0031982">
    <property type="term" value="C:vesicle"/>
    <property type="evidence" value="ECO:0007669"/>
    <property type="project" value="Ensembl"/>
</dbReference>
<dbReference type="GO" id="GO:0070700">
    <property type="term" value="F:BMP receptor binding"/>
    <property type="evidence" value="ECO:0000314"/>
    <property type="project" value="MGI"/>
</dbReference>
<dbReference type="GO" id="GO:0005125">
    <property type="term" value="F:cytokine activity"/>
    <property type="evidence" value="ECO:0000318"/>
    <property type="project" value="GO_Central"/>
</dbReference>
<dbReference type="GO" id="GO:0008083">
    <property type="term" value="F:growth factor activity"/>
    <property type="evidence" value="ECO:0007669"/>
    <property type="project" value="UniProtKB-KW"/>
</dbReference>
<dbReference type="GO" id="GO:0046982">
    <property type="term" value="F:protein heterodimerization activity"/>
    <property type="evidence" value="ECO:0000314"/>
    <property type="project" value="MGI"/>
</dbReference>
<dbReference type="GO" id="GO:0030509">
    <property type="term" value="P:BMP signaling pathway"/>
    <property type="evidence" value="ECO:0000314"/>
    <property type="project" value="BHF-UCL"/>
</dbReference>
<dbReference type="GO" id="GO:0060348">
    <property type="term" value="P:bone development"/>
    <property type="evidence" value="ECO:0000314"/>
    <property type="project" value="BHF-UCL"/>
</dbReference>
<dbReference type="GO" id="GO:0051216">
    <property type="term" value="P:cartilage development"/>
    <property type="evidence" value="ECO:0007669"/>
    <property type="project" value="UniProtKB-KW"/>
</dbReference>
<dbReference type="GO" id="GO:0071773">
    <property type="term" value="P:cellular response to BMP stimulus"/>
    <property type="evidence" value="ECO:0000315"/>
    <property type="project" value="BHF-UCL"/>
</dbReference>
<dbReference type="GO" id="GO:0071281">
    <property type="term" value="P:cellular response to iron ion"/>
    <property type="evidence" value="ECO:0000250"/>
    <property type="project" value="BHF-UCL"/>
</dbReference>
<dbReference type="GO" id="GO:0071260">
    <property type="term" value="P:cellular response to mechanical stimulus"/>
    <property type="evidence" value="ECO:0007669"/>
    <property type="project" value="Ensembl"/>
</dbReference>
<dbReference type="GO" id="GO:0001958">
    <property type="term" value="P:endochondral ossification"/>
    <property type="evidence" value="ECO:0007669"/>
    <property type="project" value="Ensembl"/>
</dbReference>
<dbReference type="GO" id="GO:0001654">
    <property type="term" value="P:eye development"/>
    <property type="evidence" value="ECO:0007669"/>
    <property type="project" value="Ensembl"/>
</dbReference>
<dbReference type="GO" id="GO:0006955">
    <property type="term" value="P:immune response"/>
    <property type="evidence" value="ECO:0000315"/>
    <property type="project" value="BHF-UCL"/>
</dbReference>
<dbReference type="GO" id="GO:0006954">
    <property type="term" value="P:inflammatory response"/>
    <property type="evidence" value="ECO:0007669"/>
    <property type="project" value="Ensembl"/>
</dbReference>
<dbReference type="GO" id="GO:0006879">
    <property type="term" value="P:intracellular iron ion homeostasis"/>
    <property type="evidence" value="ECO:0000250"/>
    <property type="project" value="BHF-UCL"/>
</dbReference>
<dbReference type="GO" id="GO:0001822">
    <property type="term" value="P:kidney development"/>
    <property type="evidence" value="ECO:0007669"/>
    <property type="project" value="Ensembl"/>
</dbReference>
<dbReference type="GO" id="GO:0030539">
    <property type="term" value="P:male genitalia development"/>
    <property type="evidence" value="ECO:0007669"/>
    <property type="project" value="Ensembl"/>
</dbReference>
<dbReference type="GO" id="GO:0060586">
    <property type="term" value="P:multicellular organismal-level iron ion homeostasis"/>
    <property type="evidence" value="ECO:0000315"/>
    <property type="project" value="UniProtKB"/>
</dbReference>
<dbReference type="GO" id="GO:1903392">
    <property type="term" value="P:negative regulation of adherens junction organization"/>
    <property type="evidence" value="ECO:0000314"/>
    <property type="project" value="ARUK-UCL"/>
</dbReference>
<dbReference type="GO" id="GO:2000048">
    <property type="term" value="P:negative regulation of cell-cell adhesion mediated by cadherin"/>
    <property type="evidence" value="ECO:0000314"/>
    <property type="project" value="ARUK-UCL"/>
</dbReference>
<dbReference type="GO" id="GO:0000122">
    <property type="term" value="P:negative regulation of transcription by RNA polymerase II"/>
    <property type="evidence" value="ECO:0000250"/>
    <property type="project" value="BHF-UCL"/>
</dbReference>
<dbReference type="GO" id="GO:0030182">
    <property type="term" value="P:neuron differentiation"/>
    <property type="evidence" value="ECO:0007669"/>
    <property type="project" value="Ensembl"/>
</dbReference>
<dbReference type="GO" id="GO:0001649">
    <property type="term" value="P:osteoblast differentiation"/>
    <property type="evidence" value="ECO:0007669"/>
    <property type="project" value="Ensembl"/>
</dbReference>
<dbReference type="GO" id="GO:0032349">
    <property type="term" value="P:positive regulation of aldosterone biosynthetic process"/>
    <property type="evidence" value="ECO:0000314"/>
    <property type="project" value="UniProtKB"/>
</dbReference>
<dbReference type="GO" id="GO:2000860">
    <property type="term" value="P:positive regulation of aldosterone secretion"/>
    <property type="evidence" value="ECO:0007669"/>
    <property type="project" value="Ensembl"/>
</dbReference>
<dbReference type="GO" id="GO:0030501">
    <property type="term" value="P:positive regulation of bone mineralization"/>
    <property type="evidence" value="ECO:0000314"/>
    <property type="project" value="BHF-UCL"/>
</dbReference>
<dbReference type="GO" id="GO:0008284">
    <property type="term" value="P:positive regulation of cell population proliferation"/>
    <property type="evidence" value="ECO:0000303"/>
    <property type="project" value="BHF-UCL"/>
</dbReference>
<dbReference type="GO" id="GO:0032332">
    <property type="term" value="P:positive regulation of chondrocyte differentiation"/>
    <property type="evidence" value="ECO:0007669"/>
    <property type="project" value="Ensembl"/>
</dbReference>
<dbReference type="GO" id="GO:0045603">
    <property type="term" value="P:positive regulation of endothelial cell differentiation"/>
    <property type="evidence" value="ECO:0007669"/>
    <property type="project" value="Ensembl"/>
</dbReference>
<dbReference type="GO" id="GO:0001938">
    <property type="term" value="P:positive regulation of endothelial cell proliferation"/>
    <property type="evidence" value="ECO:0007669"/>
    <property type="project" value="Ensembl"/>
</dbReference>
<dbReference type="GO" id="GO:0050679">
    <property type="term" value="P:positive regulation of epithelial cell proliferation"/>
    <property type="evidence" value="ECO:0000314"/>
    <property type="project" value="BHF-UCL"/>
</dbReference>
<dbReference type="GO" id="GO:0010628">
    <property type="term" value="P:positive regulation of gene expression"/>
    <property type="evidence" value="ECO:0000315"/>
    <property type="project" value="ARUK-UCL"/>
</dbReference>
<dbReference type="GO" id="GO:1902533">
    <property type="term" value="P:positive regulation of intracellular signal transduction"/>
    <property type="evidence" value="ECO:0000314"/>
    <property type="project" value="ARUK-UCL"/>
</dbReference>
<dbReference type="GO" id="GO:0031666">
    <property type="term" value="P:positive regulation of lipopolysaccharide-mediated signaling pathway"/>
    <property type="evidence" value="ECO:0000250"/>
    <property type="project" value="BHF-UCL"/>
</dbReference>
<dbReference type="GO" id="GO:0045666">
    <property type="term" value="P:positive regulation of neuron differentiation"/>
    <property type="evidence" value="ECO:0007669"/>
    <property type="project" value="Ensembl"/>
</dbReference>
<dbReference type="GO" id="GO:0045669">
    <property type="term" value="P:positive regulation of osteoblast differentiation"/>
    <property type="evidence" value="ECO:0000314"/>
    <property type="project" value="BHF-UCL"/>
</dbReference>
<dbReference type="GO" id="GO:0050714">
    <property type="term" value="P:positive regulation of protein secretion"/>
    <property type="evidence" value="ECO:0000303"/>
    <property type="project" value="BHF-UCL"/>
</dbReference>
<dbReference type="GO" id="GO:0060391">
    <property type="term" value="P:positive regulation of SMAD protein signal transduction"/>
    <property type="evidence" value="ECO:0000314"/>
    <property type="project" value="BHF-UCL"/>
</dbReference>
<dbReference type="GO" id="GO:0045944">
    <property type="term" value="P:positive regulation of transcription by RNA polymerase II"/>
    <property type="evidence" value="ECO:0000314"/>
    <property type="project" value="UniProtKB"/>
</dbReference>
<dbReference type="GO" id="GO:0043117">
    <property type="term" value="P:positive regulation of vascular permeability"/>
    <property type="evidence" value="ECO:0000314"/>
    <property type="project" value="ARUK-UCL"/>
</dbReference>
<dbReference type="GO" id="GO:0014823">
    <property type="term" value="P:response to activity"/>
    <property type="evidence" value="ECO:0007669"/>
    <property type="project" value="Ensembl"/>
</dbReference>
<dbReference type="GO" id="GO:0051384">
    <property type="term" value="P:response to glucocorticoid"/>
    <property type="evidence" value="ECO:0007669"/>
    <property type="project" value="Ensembl"/>
</dbReference>
<dbReference type="GO" id="GO:0032026">
    <property type="term" value="P:response to magnesium ion"/>
    <property type="evidence" value="ECO:0007669"/>
    <property type="project" value="Ensembl"/>
</dbReference>
<dbReference type="GO" id="GO:0032526">
    <property type="term" value="P:response to retinoic acid"/>
    <property type="evidence" value="ECO:0007669"/>
    <property type="project" value="Ensembl"/>
</dbReference>
<dbReference type="GO" id="GO:0001501">
    <property type="term" value="P:skeletal system development"/>
    <property type="evidence" value="ECO:0000304"/>
    <property type="project" value="ProtInc"/>
</dbReference>
<dbReference type="GO" id="GO:0003323">
    <property type="term" value="P:type B pancreatic cell development"/>
    <property type="evidence" value="ECO:0000314"/>
    <property type="project" value="BHF-UCL"/>
</dbReference>
<dbReference type="CDD" id="cd19396">
    <property type="entry name" value="TGF_beta_BMP6"/>
    <property type="match status" value="1"/>
</dbReference>
<dbReference type="FunFam" id="2.10.90.10:FF:000003">
    <property type="entry name" value="Bone morphogenetic protein 5"/>
    <property type="match status" value="1"/>
</dbReference>
<dbReference type="Gene3D" id="2.60.120.970">
    <property type="match status" value="1"/>
</dbReference>
<dbReference type="Gene3D" id="2.10.90.10">
    <property type="entry name" value="Cystine-knot cytokines"/>
    <property type="match status" value="1"/>
</dbReference>
<dbReference type="InterPro" id="IPR029034">
    <property type="entry name" value="Cystine-knot_cytokine"/>
</dbReference>
<dbReference type="InterPro" id="IPR001839">
    <property type="entry name" value="TGF-b_C"/>
</dbReference>
<dbReference type="InterPro" id="IPR001111">
    <property type="entry name" value="TGF-b_propeptide"/>
</dbReference>
<dbReference type="InterPro" id="IPR015615">
    <property type="entry name" value="TGF-beta-rel"/>
</dbReference>
<dbReference type="InterPro" id="IPR017948">
    <property type="entry name" value="TGFb_CS"/>
</dbReference>
<dbReference type="PANTHER" id="PTHR11848:SF137">
    <property type="entry name" value="BONE MORPHOGENETIC PROTEIN 6"/>
    <property type="match status" value="1"/>
</dbReference>
<dbReference type="PANTHER" id="PTHR11848">
    <property type="entry name" value="TGF-BETA FAMILY"/>
    <property type="match status" value="1"/>
</dbReference>
<dbReference type="Pfam" id="PF00019">
    <property type="entry name" value="TGF_beta"/>
    <property type="match status" value="1"/>
</dbReference>
<dbReference type="Pfam" id="PF00688">
    <property type="entry name" value="TGFb_propeptide"/>
    <property type="match status" value="1"/>
</dbReference>
<dbReference type="SMART" id="SM00204">
    <property type="entry name" value="TGFB"/>
    <property type="match status" value="1"/>
</dbReference>
<dbReference type="SUPFAM" id="SSF57501">
    <property type="entry name" value="Cystine-knot cytokines"/>
    <property type="match status" value="1"/>
</dbReference>
<dbReference type="PROSITE" id="PS00250">
    <property type="entry name" value="TGF_BETA_1"/>
    <property type="match status" value="1"/>
</dbReference>
<dbReference type="PROSITE" id="PS51362">
    <property type="entry name" value="TGF_BETA_2"/>
    <property type="match status" value="1"/>
</dbReference>
<name>BMP6_HUMAN</name>
<gene>
    <name type="primary">BMP6</name>
    <name type="synonym">VGR</name>
</gene>
<organism>
    <name type="scientific">Homo sapiens</name>
    <name type="common">Human</name>
    <dbReference type="NCBI Taxonomy" id="9606"/>
    <lineage>
        <taxon>Eukaryota</taxon>
        <taxon>Metazoa</taxon>
        <taxon>Chordata</taxon>
        <taxon>Craniata</taxon>
        <taxon>Vertebrata</taxon>
        <taxon>Euteleostomi</taxon>
        <taxon>Mammalia</taxon>
        <taxon>Eutheria</taxon>
        <taxon>Euarchontoglires</taxon>
        <taxon>Primates</taxon>
        <taxon>Haplorrhini</taxon>
        <taxon>Catarrhini</taxon>
        <taxon>Hominidae</taxon>
        <taxon>Homo</taxon>
    </lineage>
</organism>
<protein>
    <recommendedName>
        <fullName>Bone morphogenetic protein 6</fullName>
        <shortName>BMP-6</shortName>
    </recommendedName>
    <alternativeName>
        <fullName>VG-1-related protein</fullName>
        <shortName>VG-1-R</shortName>
        <shortName>VGR-1</shortName>
    </alternativeName>
</protein>
<sequence length="513" mass="57226">MPGLGRRAQWLCWWWGLLCSCCGPPPLRPPLPAAAAAAAGGQLLGDGGSPGRTEQPPPSPQSSSGFLYRRLKTQEKREMQKEILSVLGLPHRPRPLHGLQQPQPPALRQQEEQQQQQQLPRGEPPPGRLKSAPLFMLDLYNALSADNDEDGASEGERQQSWPHEAASSSQRRQPPPGAAHPLNRKSLLAPGSGSGGASPLTSAQDSAFLNDADMVMSFVNLVEYDKEFSPRQRHHKEFKFNLSQIPEGEVVTAAEFRIYKDCVMGSFKNQTFLISIYQVLQEHQHRDSDLFLLDTRVVWASEEGWLEFDITATSNLWVVTPQHNMGLQLSVVTRDGVHVHPRAAGLVGRDGPYDKQPFMVAFFKVSEVHVRTTRSASSRRRQQSRNRSTQSQDVARVSSASDYNSSELKTACRKHELYVSFQDLGWQDWIIAPKGYAANYCDGECSFPLNAHMNATNHAIVQTLVHLMNPEYVPKPCCAPTKLNAISVLYFDDNSNVILKKYRNMVVRACGCH</sequence>
<comment type="function">
    <text evidence="5 6 10 11 13 15">Growth factor of the TGF-beta superfamily that plays essential roles in many developmental processes including cartilage and bone formation (PubMed:31019025). Also plays an important role in the regulation of HAMP/hepcidin expression and iron metabolism by acting as a ligand for hemojuvelin/HJV (PubMed:26582087). Also acts to promote expression of HAMP, potentially via the interaction with its receptor BMPR1A/ALK3 (PubMed:30097509, PubMed:31800957). Initiates the canonical BMP signaling cascade by associating with type I receptor ACVR1 and type II receptor ACVR2B (PubMed:18070108). In turn, ACVR1 propagates signal by phosphorylating SMAD1/5/8 that travel to the nucleus and act as activators and repressors of transcription of target. Can also signal through non-canonical pathway such as TAZ-Hippo signaling cascade to modulate VEGF signaling by regulating VEGFR2 expression (PubMed:33021694).</text>
</comment>
<comment type="subunit">
    <text evidence="1 5 10 13">Interacts with SOSTDC1 (By similarity). Interacts (when glycosylated) with type I receptor ACVR1; the interaction may induce HAMP expression (PubMed:18070108, PubMed:31800957). Interacts with type II receptor ACVR2B (PubMed:18070108). Interacts with Hemojuvelin/HJV (By similarity). Interacts with ERFE; the interaction inhibits BMP-induced transcription of HAMP (PubMed:30097509, PubMed:31800957). Interacts with BMPR1A/ALK3 (PubMed:31800957). Forms heterodimers with BMP2 in vitro; the heterodimer then binds to its receptor BMPR1A /ALK3 and may induce HAMP expression (PubMed:31800957).</text>
</comment>
<comment type="subcellular location">
    <subcellularLocation>
        <location evidence="6">Secreted</location>
    </subcellularLocation>
</comment>
<comment type="PTM">
    <text evidence="5">Glycosylated at Asn-454. Glycosylation is crucial for recognition by the activin receptor type I/ACVR1.</text>
</comment>
<comment type="disease" evidence="6 7 8 9 12 14 16">
    <disease id="DI-06548">
        <name>Iron overload</name>
        <acronym>IO</acronym>
        <description>A disorder of iron homeostasis with incomplete and age-dependent penetrance. It is characterized by adult onset of increased hepatic and systemic iron levels, increased serum ferritin, normal or high transferrin saturation, and inappropriately low or normal levels of hepcidin. The severity of the phenotype depends on age, sex, as well as additional genetic or acquired factors including alcohol consumption and increased body weight.</description>
        <dbReference type="MIM" id="620121"/>
    </disease>
    <text>Disease susceptibility is associated with variants affecting the gene represented in this entry.</text>
</comment>
<comment type="similarity">
    <text evidence="17">Belongs to the TGF-beta family.</text>
</comment>
<comment type="online information" name="Wikipedia">
    <link uri="https://en.wikipedia.org/wiki/Bone_morphogenetic_protein_6"/>
    <text>Bone morphogenetic protein 6 entry</text>
</comment>